<organism>
    <name type="scientific">Nostoc sp. (strain PCC 7120 / SAG 25.82 / UTEX 2576)</name>
    <dbReference type="NCBI Taxonomy" id="103690"/>
    <lineage>
        <taxon>Bacteria</taxon>
        <taxon>Bacillati</taxon>
        <taxon>Cyanobacteriota</taxon>
        <taxon>Cyanophyceae</taxon>
        <taxon>Nostocales</taxon>
        <taxon>Nostocaceae</taxon>
        <taxon>Nostoc</taxon>
    </lineage>
</organism>
<dbReference type="EC" id="2.1.1.33" evidence="2"/>
<dbReference type="EMBL" id="BA000019">
    <property type="protein sequence ID" value="BAB73544.1"/>
    <property type="molecule type" value="Genomic_DNA"/>
</dbReference>
<dbReference type="PIR" id="AG2036">
    <property type="entry name" value="AG2036"/>
</dbReference>
<dbReference type="SMR" id="Q8YVX4"/>
<dbReference type="STRING" id="103690.gene:10493864"/>
<dbReference type="DNASU" id="1105437"/>
<dbReference type="KEGG" id="ana:alr1845"/>
<dbReference type="eggNOG" id="COG0220">
    <property type="taxonomic scope" value="Bacteria"/>
</dbReference>
<dbReference type="UniPathway" id="UPA00989"/>
<dbReference type="Proteomes" id="UP000002483">
    <property type="component" value="Chromosome"/>
</dbReference>
<dbReference type="GO" id="GO:0043527">
    <property type="term" value="C:tRNA methyltransferase complex"/>
    <property type="evidence" value="ECO:0007669"/>
    <property type="project" value="TreeGrafter"/>
</dbReference>
<dbReference type="GO" id="GO:0008176">
    <property type="term" value="F:tRNA (guanine(46)-N7)-methyltransferase activity"/>
    <property type="evidence" value="ECO:0007669"/>
    <property type="project" value="UniProtKB-UniRule"/>
</dbReference>
<dbReference type="CDD" id="cd02440">
    <property type="entry name" value="AdoMet_MTases"/>
    <property type="match status" value="1"/>
</dbReference>
<dbReference type="Gene3D" id="3.40.50.150">
    <property type="entry name" value="Vaccinia Virus protein VP39"/>
    <property type="match status" value="1"/>
</dbReference>
<dbReference type="HAMAP" id="MF_01057">
    <property type="entry name" value="tRNA_methyltr_TrmB"/>
    <property type="match status" value="1"/>
</dbReference>
<dbReference type="InterPro" id="IPR029063">
    <property type="entry name" value="SAM-dependent_MTases_sf"/>
</dbReference>
<dbReference type="InterPro" id="IPR003358">
    <property type="entry name" value="tRNA_(Gua-N-7)_MeTrfase_Trmb"/>
</dbReference>
<dbReference type="InterPro" id="IPR055361">
    <property type="entry name" value="tRNA_methyltr_TrmB_bact"/>
</dbReference>
<dbReference type="NCBIfam" id="TIGR00091">
    <property type="entry name" value="tRNA (guanosine(46)-N7)-methyltransferase TrmB"/>
    <property type="match status" value="1"/>
</dbReference>
<dbReference type="PANTHER" id="PTHR23417">
    <property type="entry name" value="3-DEOXY-D-MANNO-OCTULOSONIC-ACID TRANSFERASE/TRNA GUANINE-N 7 - -METHYLTRANSFERASE"/>
    <property type="match status" value="1"/>
</dbReference>
<dbReference type="PANTHER" id="PTHR23417:SF21">
    <property type="entry name" value="TRNA (GUANINE-N(7)-)-METHYLTRANSFERASE"/>
    <property type="match status" value="1"/>
</dbReference>
<dbReference type="Pfam" id="PF02390">
    <property type="entry name" value="Methyltransf_4"/>
    <property type="match status" value="1"/>
</dbReference>
<dbReference type="SUPFAM" id="SSF53335">
    <property type="entry name" value="S-adenosyl-L-methionine-dependent methyltransferases"/>
    <property type="match status" value="1"/>
</dbReference>
<dbReference type="PROSITE" id="PS51625">
    <property type="entry name" value="SAM_MT_TRMB"/>
    <property type="match status" value="1"/>
</dbReference>
<proteinExistence type="inferred from homology"/>
<keyword id="KW-0489">Methyltransferase</keyword>
<keyword id="KW-1185">Reference proteome</keyword>
<keyword id="KW-0949">S-adenosyl-L-methionine</keyword>
<keyword id="KW-0808">Transferase</keyword>
<keyword id="KW-0819">tRNA processing</keyword>
<feature type="chain" id="PRO_0000171285" description="tRNA (guanine-N(7)-)-methyltransferase">
    <location>
        <begin position="1"/>
        <end position="219"/>
    </location>
</feature>
<feature type="active site" evidence="1">
    <location>
        <position position="125"/>
    </location>
</feature>
<feature type="binding site" evidence="2">
    <location>
        <position position="47"/>
    </location>
    <ligand>
        <name>S-adenosyl-L-methionine</name>
        <dbReference type="ChEBI" id="CHEBI:59789"/>
    </ligand>
</feature>
<feature type="binding site" evidence="2">
    <location>
        <position position="72"/>
    </location>
    <ligand>
        <name>S-adenosyl-L-methionine</name>
        <dbReference type="ChEBI" id="CHEBI:59789"/>
    </ligand>
</feature>
<feature type="binding site" evidence="2">
    <location>
        <position position="99"/>
    </location>
    <ligand>
        <name>S-adenosyl-L-methionine</name>
        <dbReference type="ChEBI" id="CHEBI:59789"/>
    </ligand>
</feature>
<feature type="binding site" evidence="2">
    <location>
        <position position="125"/>
    </location>
    <ligand>
        <name>S-adenosyl-L-methionine</name>
        <dbReference type="ChEBI" id="CHEBI:59789"/>
    </ligand>
</feature>
<feature type="binding site" evidence="2">
    <location>
        <position position="129"/>
    </location>
    <ligand>
        <name>substrate</name>
    </ligand>
</feature>
<feature type="binding site" evidence="2">
    <location>
        <position position="161"/>
    </location>
    <ligand>
        <name>substrate</name>
    </ligand>
</feature>
<evidence type="ECO:0000250" key="1"/>
<evidence type="ECO:0000255" key="2">
    <source>
        <dbReference type="HAMAP-Rule" id="MF_01057"/>
    </source>
</evidence>
<comment type="function">
    <text evidence="2">Catalyzes the formation of N(7)-methylguanine at position 46 (m7G46) in tRNA.</text>
</comment>
<comment type="catalytic activity">
    <reaction evidence="2">
        <text>guanosine(46) in tRNA + S-adenosyl-L-methionine = N(7)-methylguanosine(46) in tRNA + S-adenosyl-L-homocysteine</text>
        <dbReference type="Rhea" id="RHEA:42708"/>
        <dbReference type="Rhea" id="RHEA-COMP:10188"/>
        <dbReference type="Rhea" id="RHEA-COMP:10189"/>
        <dbReference type="ChEBI" id="CHEBI:57856"/>
        <dbReference type="ChEBI" id="CHEBI:59789"/>
        <dbReference type="ChEBI" id="CHEBI:74269"/>
        <dbReference type="ChEBI" id="CHEBI:74480"/>
        <dbReference type="EC" id="2.1.1.33"/>
    </reaction>
</comment>
<comment type="pathway">
    <text evidence="2">tRNA modification; N(7)-methylguanine-tRNA biosynthesis.</text>
</comment>
<comment type="similarity">
    <text evidence="2">Belongs to the class I-like SAM-binding methyltransferase superfamily. TrmB family.</text>
</comment>
<accession>Q8YVX4</accession>
<reference key="1">
    <citation type="journal article" date="2001" name="DNA Res.">
        <title>Complete genomic sequence of the filamentous nitrogen-fixing cyanobacterium Anabaena sp. strain PCC 7120.</title>
        <authorList>
            <person name="Kaneko T."/>
            <person name="Nakamura Y."/>
            <person name="Wolk C.P."/>
            <person name="Kuritz T."/>
            <person name="Sasamoto S."/>
            <person name="Watanabe A."/>
            <person name="Iriguchi M."/>
            <person name="Ishikawa A."/>
            <person name="Kawashima K."/>
            <person name="Kimura T."/>
            <person name="Kishida Y."/>
            <person name="Kohara M."/>
            <person name="Matsumoto M."/>
            <person name="Matsuno A."/>
            <person name="Muraki A."/>
            <person name="Nakazaki N."/>
            <person name="Shimpo S."/>
            <person name="Sugimoto M."/>
            <person name="Takazawa M."/>
            <person name="Yamada M."/>
            <person name="Yasuda M."/>
            <person name="Tabata S."/>
        </authorList>
    </citation>
    <scope>NUCLEOTIDE SEQUENCE [LARGE SCALE GENOMIC DNA]</scope>
    <source>
        <strain>PCC 7120 / SAG 25.82 / UTEX 2576</strain>
    </source>
</reference>
<protein>
    <recommendedName>
        <fullName evidence="2">tRNA (guanine-N(7)-)-methyltransferase</fullName>
        <ecNumber evidence="2">2.1.1.33</ecNumber>
    </recommendedName>
    <alternativeName>
        <fullName evidence="2">tRNA (guanine(46)-N(7))-methyltransferase</fullName>
    </alternativeName>
    <alternativeName>
        <fullName evidence="2">tRNA(m7G46)-methyltransferase</fullName>
    </alternativeName>
</protein>
<gene>
    <name evidence="2" type="primary">trmB</name>
    <name type="ordered locus">alr1845</name>
</gene>
<sequence>MISGVSALPFVRVRQHVNPLAQKYLTPANPLEWEKAYSTPHQPLHLDIGCARGRFVLQMAQVEPNWNFLGLEIRESLVIEANQFRSQLGLTNLHYLYCNANNSLQPLLSSLPTGILQRVTIQFPDPWFKTRHAKRRVVQPELVQDIANYLAVGGVVFLQSDMEFVAVEMCDRFAANPAFKKVGTGEWLTENPLPVATERETTTQNRGEPVYRALFERSS</sequence>
<name>TRMB_NOSS1</name>